<organism>
    <name type="scientific">Leifsonia xyli subsp. xyli (strain CTCB07)</name>
    <dbReference type="NCBI Taxonomy" id="281090"/>
    <lineage>
        <taxon>Bacteria</taxon>
        <taxon>Bacillati</taxon>
        <taxon>Actinomycetota</taxon>
        <taxon>Actinomycetes</taxon>
        <taxon>Micrococcales</taxon>
        <taxon>Microbacteriaceae</taxon>
        <taxon>Leifsonia</taxon>
    </lineage>
</organism>
<gene>
    <name evidence="1" type="primary">frr</name>
    <name type="ordered locus">Lxx12470</name>
</gene>
<accession>Q6AEV4</accession>
<feature type="chain" id="PRO_0000167481" description="Ribosome-recycling factor">
    <location>
        <begin position="1"/>
        <end position="186"/>
    </location>
</feature>
<proteinExistence type="inferred from homology"/>
<reference key="1">
    <citation type="journal article" date="2004" name="Mol. Plant Microbe Interact.">
        <title>The genome sequence of the Gram-positive sugarcane pathogen Leifsonia xyli subsp. xyli.</title>
        <authorList>
            <person name="Monteiro-Vitorello C.B."/>
            <person name="Camargo L.E.A."/>
            <person name="Van Sluys M.A."/>
            <person name="Kitajima J.P."/>
            <person name="Truffi D."/>
            <person name="do Amaral A.M."/>
            <person name="Harakava R."/>
            <person name="de Oliveira J.C.F."/>
            <person name="Wood D."/>
            <person name="de Oliveira M.C."/>
            <person name="Miyaki C.Y."/>
            <person name="Takita M.A."/>
            <person name="da Silva A.C.R."/>
            <person name="Furlan L.R."/>
            <person name="Carraro D.M."/>
            <person name="Camarotte G."/>
            <person name="Almeida N.F. Jr."/>
            <person name="Carrer H."/>
            <person name="Coutinho L.L."/>
            <person name="El-Dorry H.A."/>
            <person name="Ferro M.I.T."/>
            <person name="Gagliardi P.R."/>
            <person name="Giglioti E."/>
            <person name="Goldman M.H.S."/>
            <person name="Goldman G.H."/>
            <person name="Kimura E.T."/>
            <person name="Ferro E.S."/>
            <person name="Kuramae E.E."/>
            <person name="Lemos E.G.M."/>
            <person name="Lemos M.V.F."/>
            <person name="Mauro S.M.Z."/>
            <person name="Machado M.A."/>
            <person name="Marino C.L."/>
            <person name="Menck C.F."/>
            <person name="Nunes L.R."/>
            <person name="Oliveira R.C."/>
            <person name="Pereira G.G."/>
            <person name="Siqueira W."/>
            <person name="de Souza A.A."/>
            <person name="Tsai S.M."/>
            <person name="Zanca A.S."/>
            <person name="Simpson A.J.G."/>
            <person name="Brumbley S.M."/>
            <person name="Setubal J.C."/>
        </authorList>
    </citation>
    <scope>NUCLEOTIDE SEQUENCE [LARGE SCALE GENOMIC DNA]</scope>
    <source>
        <strain>CTCB07</strain>
    </source>
</reference>
<evidence type="ECO:0000255" key="1">
    <source>
        <dbReference type="HAMAP-Rule" id="MF_00040"/>
    </source>
</evidence>
<dbReference type="EMBL" id="AE016822">
    <property type="protein sequence ID" value="AAT89091.1"/>
    <property type="molecule type" value="Genomic_DNA"/>
</dbReference>
<dbReference type="SMR" id="Q6AEV4"/>
<dbReference type="STRING" id="281090.Lxx12470"/>
<dbReference type="KEGG" id="lxx:Lxx12470"/>
<dbReference type="eggNOG" id="COG0233">
    <property type="taxonomic scope" value="Bacteria"/>
</dbReference>
<dbReference type="HOGENOM" id="CLU_073981_2_0_11"/>
<dbReference type="Proteomes" id="UP000001306">
    <property type="component" value="Chromosome"/>
</dbReference>
<dbReference type="GO" id="GO:0005737">
    <property type="term" value="C:cytoplasm"/>
    <property type="evidence" value="ECO:0007669"/>
    <property type="project" value="UniProtKB-SubCell"/>
</dbReference>
<dbReference type="GO" id="GO:0043023">
    <property type="term" value="F:ribosomal large subunit binding"/>
    <property type="evidence" value="ECO:0007669"/>
    <property type="project" value="TreeGrafter"/>
</dbReference>
<dbReference type="GO" id="GO:0006415">
    <property type="term" value="P:translational termination"/>
    <property type="evidence" value="ECO:0007669"/>
    <property type="project" value="UniProtKB-UniRule"/>
</dbReference>
<dbReference type="CDD" id="cd00520">
    <property type="entry name" value="RRF"/>
    <property type="match status" value="1"/>
</dbReference>
<dbReference type="FunFam" id="1.10.132.20:FF:000001">
    <property type="entry name" value="Ribosome-recycling factor"/>
    <property type="match status" value="1"/>
</dbReference>
<dbReference type="FunFam" id="3.30.1360.40:FF:000001">
    <property type="entry name" value="Ribosome-recycling factor"/>
    <property type="match status" value="1"/>
</dbReference>
<dbReference type="Gene3D" id="3.30.1360.40">
    <property type="match status" value="1"/>
</dbReference>
<dbReference type="Gene3D" id="1.10.132.20">
    <property type="entry name" value="Ribosome-recycling factor"/>
    <property type="match status" value="1"/>
</dbReference>
<dbReference type="HAMAP" id="MF_00040">
    <property type="entry name" value="RRF"/>
    <property type="match status" value="1"/>
</dbReference>
<dbReference type="InterPro" id="IPR002661">
    <property type="entry name" value="Ribosome_recyc_fac"/>
</dbReference>
<dbReference type="InterPro" id="IPR023584">
    <property type="entry name" value="Ribosome_recyc_fac_dom"/>
</dbReference>
<dbReference type="InterPro" id="IPR036191">
    <property type="entry name" value="RRF_sf"/>
</dbReference>
<dbReference type="NCBIfam" id="TIGR00496">
    <property type="entry name" value="frr"/>
    <property type="match status" value="1"/>
</dbReference>
<dbReference type="PANTHER" id="PTHR20982:SF3">
    <property type="entry name" value="MITOCHONDRIAL RIBOSOME RECYCLING FACTOR PSEUDO 1"/>
    <property type="match status" value="1"/>
</dbReference>
<dbReference type="PANTHER" id="PTHR20982">
    <property type="entry name" value="RIBOSOME RECYCLING FACTOR"/>
    <property type="match status" value="1"/>
</dbReference>
<dbReference type="Pfam" id="PF01765">
    <property type="entry name" value="RRF"/>
    <property type="match status" value="1"/>
</dbReference>
<dbReference type="SUPFAM" id="SSF55194">
    <property type="entry name" value="Ribosome recycling factor, RRF"/>
    <property type="match status" value="1"/>
</dbReference>
<comment type="function">
    <text evidence="1">Responsible for the release of ribosomes from messenger RNA at the termination of protein biosynthesis. May increase the efficiency of translation by recycling ribosomes from one round of translation to another.</text>
</comment>
<comment type="subcellular location">
    <subcellularLocation>
        <location evidence="1">Cytoplasm</location>
    </subcellularLocation>
</comment>
<comment type="similarity">
    <text evidence="1">Belongs to the RRF family.</text>
</comment>
<sequence length="186" mass="20418">MTVIADVISDASQRMSKTLEAAKEDFGTVSAGRANPALFQKVLVDYYGSPTPLAQLAGLQNPEARVLIVTPYDKGALKEIERAIVTMPSMSANVGNDGEIVRVTLPELTEDRRKEFVKIVRGKGEDAKVAIRNIRRRAKDELDALKGEVGDDEVARGEKELEALTRTNVDLVDEALKRKEAELLEV</sequence>
<protein>
    <recommendedName>
        <fullName evidence="1">Ribosome-recycling factor</fullName>
        <shortName evidence="1">RRF</shortName>
    </recommendedName>
    <alternativeName>
        <fullName evidence="1">Ribosome-releasing factor</fullName>
    </alternativeName>
</protein>
<keyword id="KW-0963">Cytoplasm</keyword>
<keyword id="KW-0648">Protein biosynthesis</keyword>
<keyword id="KW-1185">Reference proteome</keyword>
<name>RRF_LEIXX</name>